<proteinExistence type="inferred from homology"/>
<dbReference type="EMBL" id="CP000768">
    <property type="protein sequence ID" value="ABS43449.1"/>
    <property type="molecule type" value="Genomic_DNA"/>
</dbReference>
<dbReference type="SMR" id="A7H2I7"/>
<dbReference type="KEGG" id="cjd:JJD26997_0541"/>
<dbReference type="HOGENOM" id="CLU_007831_2_2_7"/>
<dbReference type="Proteomes" id="UP000002302">
    <property type="component" value="Chromosome"/>
</dbReference>
<dbReference type="GO" id="GO:0005829">
    <property type="term" value="C:cytosol"/>
    <property type="evidence" value="ECO:0007669"/>
    <property type="project" value="TreeGrafter"/>
</dbReference>
<dbReference type="GO" id="GO:0050660">
    <property type="term" value="F:flavin adenine dinucleotide binding"/>
    <property type="evidence" value="ECO:0007669"/>
    <property type="project" value="UniProtKB-UniRule"/>
</dbReference>
<dbReference type="GO" id="GO:0030488">
    <property type="term" value="P:tRNA methylation"/>
    <property type="evidence" value="ECO:0007669"/>
    <property type="project" value="TreeGrafter"/>
</dbReference>
<dbReference type="GO" id="GO:0002098">
    <property type="term" value="P:tRNA wobble uridine modification"/>
    <property type="evidence" value="ECO:0007669"/>
    <property type="project" value="InterPro"/>
</dbReference>
<dbReference type="FunFam" id="1.10.150.570:FF:000001">
    <property type="entry name" value="tRNA uridine 5-carboxymethylaminomethyl modification enzyme MnmG"/>
    <property type="match status" value="1"/>
</dbReference>
<dbReference type="FunFam" id="3.50.50.60:FF:000002">
    <property type="entry name" value="tRNA uridine 5-carboxymethylaminomethyl modification enzyme MnmG"/>
    <property type="match status" value="1"/>
</dbReference>
<dbReference type="Gene3D" id="3.50.50.60">
    <property type="entry name" value="FAD/NAD(P)-binding domain"/>
    <property type="match status" value="2"/>
</dbReference>
<dbReference type="Gene3D" id="1.10.150.570">
    <property type="entry name" value="GidA associated domain, C-terminal subdomain"/>
    <property type="match status" value="1"/>
</dbReference>
<dbReference type="Gene3D" id="1.10.10.1800">
    <property type="entry name" value="tRNA uridine 5-carboxymethylaminomethyl modification enzyme MnmG/GidA"/>
    <property type="match status" value="1"/>
</dbReference>
<dbReference type="HAMAP" id="MF_00129">
    <property type="entry name" value="MnmG_GidA"/>
    <property type="match status" value="1"/>
</dbReference>
<dbReference type="InterPro" id="IPR036188">
    <property type="entry name" value="FAD/NAD-bd_sf"/>
</dbReference>
<dbReference type="InterPro" id="IPR049312">
    <property type="entry name" value="GIDA_C_N"/>
</dbReference>
<dbReference type="InterPro" id="IPR004416">
    <property type="entry name" value="MnmG"/>
</dbReference>
<dbReference type="InterPro" id="IPR002218">
    <property type="entry name" value="MnmG-rel"/>
</dbReference>
<dbReference type="InterPro" id="IPR020595">
    <property type="entry name" value="MnmG-rel_CS"/>
</dbReference>
<dbReference type="InterPro" id="IPR026904">
    <property type="entry name" value="MnmG_C"/>
</dbReference>
<dbReference type="InterPro" id="IPR047001">
    <property type="entry name" value="MnmG_C_subdom"/>
</dbReference>
<dbReference type="InterPro" id="IPR044920">
    <property type="entry name" value="MnmG_C_subdom_sf"/>
</dbReference>
<dbReference type="InterPro" id="IPR040131">
    <property type="entry name" value="MnmG_N"/>
</dbReference>
<dbReference type="NCBIfam" id="TIGR00136">
    <property type="entry name" value="mnmG_gidA"/>
    <property type="match status" value="1"/>
</dbReference>
<dbReference type="PANTHER" id="PTHR11806">
    <property type="entry name" value="GLUCOSE INHIBITED DIVISION PROTEIN A"/>
    <property type="match status" value="1"/>
</dbReference>
<dbReference type="PANTHER" id="PTHR11806:SF0">
    <property type="entry name" value="PROTEIN MTO1 HOMOLOG, MITOCHONDRIAL"/>
    <property type="match status" value="1"/>
</dbReference>
<dbReference type="Pfam" id="PF01134">
    <property type="entry name" value="GIDA"/>
    <property type="match status" value="1"/>
</dbReference>
<dbReference type="Pfam" id="PF21680">
    <property type="entry name" value="GIDA_C_1st"/>
    <property type="match status" value="1"/>
</dbReference>
<dbReference type="Pfam" id="PF13932">
    <property type="entry name" value="SAM_GIDA_C"/>
    <property type="match status" value="1"/>
</dbReference>
<dbReference type="SMART" id="SM01228">
    <property type="entry name" value="GIDA_assoc_3"/>
    <property type="match status" value="1"/>
</dbReference>
<dbReference type="SUPFAM" id="SSF51905">
    <property type="entry name" value="FAD/NAD(P)-binding domain"/>
    <property type="match status" value="1"/>
</dbReference>
<dbReference type="PROSITE" id="PS01280">
    <property type="entry name" value="GIDA_1"/>
    <property type="match status" value="1"/>
</dbReference>
<name>MNMG_CAMJD</name>
<evidence type="ECO:0000255" key="1">
    <source>
        <dbReference type="HAMAP-Rule" id="MF_00129"/>
    </source>
</evidence>
<sequence length="619" mass="69138">MFDVIVIGGGHAGVEASAAAARMGKKTLLLTTLIEQIGAASCNPAIGGLAKGHLVKELDAMGGFMGEITDEAGIQFRILNESKGVAVQGSRVQIDMDKYRIIARNKLLKLPNLEISQEQVSALIVENDKVKGVKTNLENIYFAKKVILTTGTFLNGLIHVGENKLQAGRVGELASVNLGNYLQTLGLKMGRLKTGTCPRVDATSIDFSVLEIQDGDVNPKAFSFRSRNFNPTQLPCYIARTNTTTHEIIKNNFYRAPLFTGQIEGVGPRYCPSIEDKINRFSDKESHHLFIEPQTIDATEYYINGFSTSLPYEVQTQMLHSVKGFENAKITRFGYAIEYDYIEPTELKHTLELKKIKNLYCAGQINGTTGYEEAAVQGFMAGINASLSIDMKEPLILRRDEAYIGVLIDDLVVKGTKEPYRMFTSRAEFRLLLREENAILRLGKYGYVLGLLSEQDFAYIQNIANNLQKGLEFLLSKEFTPNNQNNAFLESLGEDKISSIVNFQKIVARASFDIEKLKKLDPMFETMDNYSLREILNEAKYCHYISMQKAQVEKMKNLSELKIPENFDFKSVSGLSNEVVEKLNHHKPPTIFAASQISGITPAALDILQIYIKMQKKKA</sequence>
<accession>A7H2I7</accession>
<gene>
    <name evidence="1" type="primary">mnmG</name>
    <name evidence="1" type="synonym">gidA</name>
    <name type="ordered locus">JJD26997_0541</name>
</gene>
<feature type="chain" id="PRO_1000016574" description="tRNA uridine 5-carboxymethylaminomethyl modification enzyme MnmG">
    <location>
        <begin position="1"/>
        <end position="619"/>
    </location>
</feature>
<feature type="binding site" evidence="1">
    <location>
        <begin position="8"/>
        <end position="13"/>
    </location>
    <ligand>
        <name>FAD</name>
        <dbReference type="ChEBI" id="CHEBI:57692"/>
    </ligand>
</feature>
<feature type="binding site" evidence="1">
    <location>
        <position position="120"/>
    </location>
    <ligand>
        <name>FAD</name>
        <dbReference type="ChEBI" id="CHEBI:57692"/>
    </ligand>
</feature>
<feature type="binding site" evidence="1">
    <location>
        <position position="175"/>
    </location>
    <ligand>
        <name>FAD</name>
        <dbReference type="ChEBI" id="CHEBI:57692"/>
    </ligand>
</feature>
<feature type="binding site" evidence="1">
    <location>
        <begin position="267"/>
        <end position="281"/>
    </location>
    <ligand>
        <name>NAD(+)</name>
        <dbReference type="ChEBI" id="CHEBI:57540"/>
    </ligand>
</feature>
<feature type="binding site" evidence="1">
    <location>
        <position position="364"/>
    </location>
    <ligand>
        <name>FAD</name>
        <dbReference type="ChEBI" id="CHEBI:57692"/>
    </ligand>
</feature>
<organism>
    <name type="scientific">Campylobacter jejuni subsp. doylei (strain ATCC BAA-1458 / RM4099 / 269.97)</name>
    <dbReference type="NCBI Taxonomy" id="360109"/>
    <lineage>
        <taxon>Bacteria</taxon>
        <taxon>Pseudomonadati</taxon>
        <taxon>Campylobacterota</taxon>
        <taxon>Epsilonproteobacteria</taxon>
        <taxon>Campylobacterales</taxon>
        <taxon>Campylobacteraceae</taxon>
        <taxon>Campylobacter</taxon>
    </lineage>
</organism>
<protein>
    <recommendedName>
        <fullName evidence="1">tRNA uridine 5-carboxymethylaminomethyl modification enzyme MnmG</fullName>
    </recommendedName>
    <alternativeName>
        <fullName evidence="1">Glucose-inhibited division protein A</fullName>
    </alternativeName>
</protein>
<reference key="1">
    <citation type="submission" date="2007-07" db="EMBL/GenBank/DDBJ databases">
        <title>Complete genome sequence of Campylobacter jejuni subsp doylei 269.97 isolated from human blood.</title>
        <authorList>
            <person name="Fouts D.E."/>
            <person name="Mongodin E.F."/>
            <person name="Puiu D."/>
            <person name="Sebastian Y."/>
            <person name="Miller W.G."/>
            <person name="Mandrell R.E."/>
            <person name="Lastovica A.J."/>
            <person name="Nelson K.E."/>
        </authorList>
    </citation>
    <scope>NUCLEOTIDE SEQUENCE [LARGE SCALE GENOMIC DNA]</scope>
    <source>
        <strain>ATCC BAA-1458 / RM4099 / 269.97</strain>
    </source>
</reference>
<comment type="function">
    <text evidence="1">NAD-binding protein involved in the addition of a carboxymethylaminomethyl (cmnm) group at the wobble position (U34) of certain tRNAs, forming tRNA-cmnm(5)s(2)U34.</text>
</comment>
<comment type="cofactor">
    <cofactor evidence="1">
        <name>FAD</name>
        <dbReference type="ChEBI" id="CHEBI:57692"/>
    </cofactor>
</comment>
<comment type="subunit">
    <text evidence="1">Homodimer. Heterotetramer of two MnmE and two MnmG subunits.</text>
</comment>
<comment type="subcellular location">
    <subcellularLocation>
        <location evidence="1">Cytoplasm</location>
    </subcellularLocation>
</comment>
<comment type="similarity">
    <text evidence="1">Belongs to the MnmG family.</text>
</comment>
<keyword id="KW-0963">Cytoplasm</keyword>
<keyword id="KW-0274">FAD</keyword>
<keyword id="KW-0285">Flavoprotein</keyword>
<keyword id="KW-0520">NAD</keyword>
<keyword id="KW-0819">tRNA processing</keyword>